<dbReference type="EMBL" id="CP000539">
    <property type="protein sequence ID" value="ABM40613.1"/>
    <property type="molecule type" value="Genomic_DNA"/>
</dbReference>
<dbReference type="SMR" id="A1W2Y8"/>
<dbReference type="STRING" id="232721.Ajs_0360"/>
<dbReference type="KEGG" id="ajs:Ajs_0360"/>
<dbReference type="eggNOG" id="COG2967">
    <property type="taxonomic scope" value="Bacteria"/>
</dbReference>
<dbReference type="HOGENOM" id="CLU_128074_1_0_4"/>
<dbReference type="Proteomes" id="UP000000645">
    <property type="component" value="Chromosome"/>
</dbReference>
<dbReference type="GO" id="GO:0070987">
    <property type="term" value="P:error-free translesion synthesis"/>
    <property type="evidence" value="ECO:0007669"/>
    <property type="project" value="TreeGrafter"/>
</dbReference>
<dbReference type="Gene3D" id="2.60.40.1470">
    <property type="entry name" value="ApaG domain"/>
    <property type="match status" value="1"/>
</dbReference>
<dbReference type="HAMAP" id="MF_00791">
    <property type="entry name" value="ApaG"/>
    <property type="match status" value="1"/>
</dbReference>
<dbReference type="InterPro" id="IPR007474">
    <property type="entry name" value="ApaG_domain"/>
</dbReference>
<dbReference type="InterPro" id="IPR036767">
    <property type="entry name" value="ApaG_sf"/>
</dbReference>
<dbReference type="InterPro" id="IPR023065">
    <property type="entry name" value="Uncharacterised_ApaG"/>
</dbReference>
<dbReference type="NCBIfam" id="NF003967">
    <property type="entry name" value="PRK05461.1"/>
    <property type="match status" value="1"/>
</dbReference>
<dbReference type="PANTHER" id="PTHR14289">
    <property type="entry name" value="F-BOX ONLY PROTEIN 3"/>
    <property type="match status" value="1"/>
</dbReference>
<dbReference type="PANTHER" id="PTHR14289:SF16">
    <property type="entry name" value="POLYMERASE DELTA-INTERACTING PROTEIN 2"/>
    <property type="match status" value="1"/>
</dbReference>
<dbReference type="Pfam" id="PF04379">
    <property type="entry name" value="DUF525"/>
    <property type="match status" value="1"/>
</dbReference>
<dbReference type="SUPFAM" id="SSF110069">
    <property type="entry name" value="ApaG-like"/>
    <property type="match status" value="1"/>
</dbReference>
<dbReference type="PROSITE" id="PS51087">
    <property type="entry name" value="APAG"/>
    <property type="match status" value="1"/>
</dbReference>
<feature type="chain" id="PRO_1000083602" description="Protein ApaG">
    <location>
        <begin position="1"/>
        <end position="137"/>
    </location>
</feature>
<feature type="domain" description="ApaG" evidence="1">
    <location>
        <begin position="2"/>
        <end position="126"/>
    </location>
</feature>
<gene>
    <name evidence="1" type="primary">apaG</name>
    <name type="ordered locus">Ajs_0360</name>
</gene>
<protein>
    <recommendedName>
        <fullName evidence="1">Protein ApaG</fullName>
    </recommendedName>
</protein>
<reference key="1">
    <citation type="submission" date="2006-12" db="EMBL/GenBank/DDBJ databases">
        <title>Complete sequence of chromosome 1 of Acidovorax sp. JS42.</title>
        <authorList>
            <person name="Copeland A."/>
            <person name="Lucas S."/>
            <person name="Lapidus A."/>
            <person name="Barry K."/>
            <person name="Detter J.C."/>
            <person name="Glavina del Rio T."/>
            <person name="Dalin E."/>
            <person name="Tice H."/>
            <person name="Pitluck S."/>
            <person name="Chertkov O."/>
            <person name="Brettin T."/>
            <person name="Bruce D."/>
            <person name="Han C."/>
            <person name="Tapia R."/>
            <person name="Gilna P."/>
            <person name="Schmutz J."/>
            <person name="Larimer F."/>
            <person name="Land M."/>
            <person name="Hauser L."/>
            <person name="Kyrpides N."/>
            <person name="Kim E."/>
            <person name="Stahl D."/>
            <person name="Richardson P."/>
        </authorList>
    </citation>
    <scope>NUCLEOTIDE SEQUENCE [LARGE SCALE GENOMIC DNA]</scope>
    <source>
        <strain>JS42</strain>
    </source>
</reference>
<name>APAG_ACISJ</name>
<evidence type="ECO:0000255" key="1">
    <source>
        <dbReference type="HAMAP-Rule" id="MF_00791"/>
    </source>
</evidence>
<organism>
    <name type="scientific">Acidovorax sp. (strain JS42)</name>
    <dbReference type="NCBI Taxonomy" id="232721"/>
    <lineage>
        <taxon>Bacteria</taxon>
        <taxon>Pseudomonadati</taxon>
        <taxon>Pseudomonadota</taxon>
        <taxon>Betaproteobacteria</taxon>
        <taxon>Burkholderiales</taxon>
        <taxon>Comamonadaceae</taxon>
        <taxon>Acidovorax</taxon>
    </lineage>
</organism>
<sequence length="137" mass="14978">MPKYQFQVQVQVQPQYLPDQSAPDEGVYSFAYTITITNTGDVTAQLISRHWIISDANGHTEQVKGLGVVGQQPLLKPGEAFQYTSGCRLRTASGSMHGSYFCVAEDGEPFTCPIELFVLEAFSPGQPGQPMAARVLH</sequence>
<proteinExistence type="inferred from homology"/>
<accession>A1W2Y8</accession>